<evidence type="ECO:0000255" key="1">
    <source>
        <dbReference type="HAMAP-Rule" id="MF_00081"/>
    </source>
</evidence>
<dbReference type="EMBL" id="AE015925">
    <property type="protein sequence ID" value="AAP04994.1"/>
    <property type="molecule type" value="Genomic_DNA"/>
</dbReference>
<dbReference type="RefSeq" id="WP_011006212.1">
    <property type="nucleotide sequence ID" value="NC_003361.3"/>
</dbReference>
<dbReference type="SMR" id="Q824B0"/>
<dbReference type="STRING" id="227941.CCA_00243"/>
<dbReference type="KEGG" id="cca:CCA_00243"/>
<dbReference type="eggNOG" id="COG1420">
    <property type="taxonomic scope" value="Bacteria"/>
</dbReference>
<dbReference type="HOGENOM" id="CLU_050019_1_0_0"/>
<dbReference type="OrthoDB" id="9783139at2"/>
<dbReference type="Proteomes" id="UP000002193">
    <property type="component" value="Chromosome"/>
</dbReference>
<dbReference type="GO" id="GO:0003677">
    <property type="term" value="F:DNA binding"/>
    <property type="evidence" value="ECO:0007669"/>
    <property type="project" value="InterPro"/>
</dbReference>
<dbReference type="GO" id="GO:0045892">
    <property type="term" value="P:negative regulation of DNA-templated transcription"/>
    <property type="evidence" value="ECO:0007669"/>
    <property type="project" value="UniProtKB-UniRule"/>
</dbReference>
<dbReference type="Gene3D" id="3.30.450.40">
    <property type="match status" value="1"/>
</dbReference>
<dbReference type="Gene3D" id="1.10.10.10">
    <property type="entry name" value="Winged helix-like DNA-binding domain superfamily/Winged helix DNA-binding domain"/>
    <property type="match status" value="1"/>
</dbReference>
<dbReference type="HAMAP" id="MF_00081">
    <property type="entry name" value="HrcA"/>
    <property type="match status" value="1"/>
</dbReference>
<dbReference type="InterPro" id="IPR029016">
    <property type="entry name" value="GAF-like_dom_sf"/>
</dbReference>
<dbReference type="InterPro" id="IPR002571">
    <property type="entry name" value="HrcA"/>
</dbReference>
<dbReference type="InterPro" id="IPR021153">
    <property type="entry name" value="HrcA_C"/>
</dbReference>
<dbReference type="InterPro" id="IPR036388">
    <property type="entry name" value="WH-like_DNA-bd_sf"/>
</dbReference>
<dbReference type="InterPro" id="IPR036390">
    <property type="entry name" value="WH_DNA-bd_sf"/>
</dbReference>
<dbReference type="NCBIfam" id="TIGR00331">
    <property type="entry name" value="hrcA"/>
    <property type="match status" value="1"/>
</dbReference>
<dbReference type="PANTHER" id="PTHR34824">
    <property type="entry name" value="HEAT-INDUCIBLE TRANSCRIPTION REPRESSOR HRCA"/>
    <property type="match status" value="1"/>
</dbReference>
<dbReference type="PANTHER" id="PTHR34824:SF1">
    <property type="entry name" value="HEAT-INDUCIBLE TRANSCRIPTION REPRESSOR HRCA"/>
    <property type="match status" value="1"/>
</dbReference>
<dbReference type="Pfam" id="PF01628">
    <property type="entry name" value="HrcA"/>
    <property type="match status" value="1"/>
</dbReference>
<dbReference type="PIRSF" id="PIRSF005485">
    <property type="entry name" value="HrcA"/>
    <property type="match status" value="1"/>
</dbReference>
<dbReference type="SUPFAM" id="SSF55781">
    <property type="entry name" value="GAF domain-like"/>
    <property type="match status" value="1"/>
</dbReference>
<dbReference type="SUPFAM" id="SSF46785">
    <property type="entry name" value="Winged helix' DNA-binding domain"/>
    <property type="match status" value="1"/>
</dbReference>
<proteinExistence type="inferred from homology"/>
<name>HRCA_CHLCV</name>
<sequence>MSRSWISKRESKILYILLTTTELYLKTGHPVGSKTLKEYEGSNLSTATIRNYFSELEAEGFLKKNHISGGRIPTDLAFRYYVDHCADCSQDELPESTINLLNQLPEESQNIVKDLQKASELLGEALQLPTCFSSPRFDNDSVTNIQLSLVDEQRAVVILSTEFGQIFTDTLWLSEASNPASLKRIEIFLQSYVRKQSPMEILSQKEEDIGMTLYNEVVVRYLTRYCNFSEEDLYQTGLSKLLRYESFKDPDMLALGLSFFENRRHMCKLLDIGMHRDRPTAFIGNELSDIFRTPNPQCAVITIPYYMNRTPLGAFGVLGPVNLPYKEIFKTLTIFADKIKASLTQSFYKFKLSFRRPCPSDPTLSKEPTLLARYSSIKLLPPKETS</sequence>
<protein>
    <recommendedName>
        <fullName evidence="1">Heat-inducible transcription repressor HrcA</fullName>
    </recommendedName>
</protein>
<organism>
    <name type="scientific">Chlamydia caviae (strain ATCC VR-813 / DSM 19441 / 03DC25 / GPIC)</name>
    <name type="common">Chlamydophila caviae</name>
    <dbReference type="NCBI Taxonomy" id="227941"/>
    <lineage>
        <taxon>Bacteria</taxon>
        <taxon>Pseudomonadati</taxon>
        <taxon>Chlamydiota</taxon>
        <taxon>Chlamydiia</taxon>
        <taxon>Chlamydiales</taxon>
        <taxon>Chlamydiaceae</taxon>
        <taxon>Chlamydia/Chlamydophila group</taxon>
        <taxon>Chlamydia</taxon>
    </lineage>
</organism>
<accession>Q824B0</accession>
<reference key="1">
    <citation type="journal article" date="2003" name="Nucleic Acids Res.">
        <title>Genome sequence of Chlamydophila caviae (Chlamydia psittaci GPIC): examining the role of niche-specific genes in the evolution of the Chlamydiaceae.</title>
        <authorList>
            <person name="Read T.D."/>
            <person name="Myers G.S.A."/>
            <person name="Brunham R.C."/>
            <person name="Nelson W.C."/>
            <person name="Paulsen I.T."/>
            <person name="Heidelberg J.F."/>
            <person name="Holtzapple E.K."/>
            <person name="Khouri H.M."/>
            <person name="Federova N.B."/>
            <person name="Carty H.A."/>
            <person name="Umayam L.A."/>
            <person name="Haft D.H."/>
            <person name="Peterson J.D."/>
            <person name="Beanan M.J."/>
            <person name="White O."/>
            <person name="Salzberg S.L."/>
            <person name="Hsia R.-C."/>
            <person name="McClarty G."/>
            <person name="Rank R.G."/>
            <person name="Bavoil P.M."/>
            <person name="Fraser C.M."/>
        </authorList>
    </citation>
    <scope>NUCLEOTIDE SEQUENCE [LARGE SCALE GENOMIC DNA]</scope>
    <source>
        <strain>ATCC VR-813 / DSM 19441 / 03DC25 / GPIC</strain>
    </source>
</reference>
<comment type="function">
    <text evidence="1">Negative regulator of class I heat shock genes (grpE-dnaK-dnaJ and groELS operons). Prevents heat-shock induction of these operons.</text>
</comment>
<comment type="similarity">
    <text evidence="1">Belongs to the HrcA family.</text>
</comment>
<feature type="chain" id="PRO_0000182465" description="Heat-inducible transcription repressor HrcA">
    <location>
        <begin position="1"/>
        <end position="386"/>
    </location>
</feature>
<gene>
    <name evidence="1" type="primary">hrcA</name>
    <name type="ordered locus">CCA_00243</name>
</gene>
<keyword id="KW-0678">Repressor</keyword>
<keyword id="KW-0346">Stress response</keyword>
<keyword id="KW-0804">Transcription</keyword>
<keyword id="KW-0805">Transcription regulation</keyword>